<dbReference type="EMBL" id="CP000553">
    <property type="protein sequence ID" value="ABM76532.1"/>
    <property type="molecule type" value="Genomic_DNA"/>
</dbReference>
<dbReference type="RefSeq" id="WP_011824497.1">
    <property type="nucleotide sequence ID" value="NC_008819.1"/>
</dbReference>
<dbReference type="KEGG" id="pme:NATL1_19761"/>
<dbReference type="eggNOG" id="COG0254">
    <property type="taxonomic scope" value="Bacteria"/>
</dbReference>
<dbReference type="HOGENOM" id="CLU_114306_1_2_3"/>
<dbReference type="Proteomes" id="UP000002592">
    <property type="component" value="Chromosome"/>
</dbReference>
<dbReference type="GO" id="GO:1990904">
    <property type="term" value="C:ribonucleoprotein complex"/>
    <property type="evidence" value="ECO:0007669"/>
    <property type="project" value="UniProtKB-KW"/>
</dbReference>
<dbReference type="GO" id="GO:0005840">
    <property type="term" value="C:ribosome"/>
    <property type="evidence" value="ECO:0007669"/>
    <property type="project" value="UniProtKB-KW"/>
</dbReference>
<dbReference type="GO" id="GO:0019843">
    <property type="term" value="F:rRNA binding"/>
    <property type="evidence" value="ECO:0007669"/>
    <property type="project" value="UniProtKB-KW"/>
</dbReference>
<dbReference type="GO" id="GO:0003735">
    <property type="term" value="F:structural constituent of ribosome"/>
    <property type="evidence" value="ECO:0007669"/>
    <property type="project" value="InterPro"/>
</dbReference>
<dbReference type="GO" id="GO:0006412">
    <property type="term" value="P:translation"/>
    <property type="evidence" value="ECO:0007669"/>
    <property type="project" value="UniProtKB-UniRule"/>
</dbReference>
<dbReference type="Gene3D" id="4.10.830.30">
    <property type="entry name" value="Ribosomal protein L31"/>
    <property type="match status" value="1"/>
</dbReference>
<dbReference type="HAMAP" id="MF_00501">
    <property type="entry name" value="Ribosomal_bL31_1"/>
    <property type="match status" value="1"/>
</dbReference>
<dbReference type="InterPro" id="IPR034704">
    <property type="entry name" value="Ribosomal_bL28/bL31-like_sf"/>
</dbReference>
<dbReference type="InterPro" id="IPR002150">
    <property type="entry name" value="Ribosomal_bL31"/>
</dbReference>
<dbReference type="InterPro" id="IPR027491">
    <property type="entry name" value="Ribosomal_bL31_A"/>
</dbReference>
<dbReference type="InterPro" id="IPR042105">
    <property type="entry name" value="Ribosomal_bL31_sf"/>
</dbReference>
<dbReference type="NCBIfam" id="TIGR00105">
    <property type="entry name" value="L31"/>
    <property type="match status" value="1"/>
</dbReference>
<dbReference type="NCBIfam" id="NF001809">
    <property type="entry name" value="PRK00528.1"/>
    <property type="match status" value="1"/>
</dbReference>
<dbReference type="PANTHER" id="PTHR33280">
    <property type="entry name" value="50S RIBOSOMAL PROTEIN L31, CHLOROPLASTIC"/>
    <property type="match status" value="1"/>
</dbReference>
<dbReference type="PANTHER" id="PTHR33280:SF1">
    <property type="entry name" value="LARGE RIBOSOMAL SUBUNIT PROTEIN BL31C"/>
    <property type="match status" value="1"/>
</dbReference>
<dbReference type="Pfam" id="PF01197">
    <property type="entry name" value="Ribosomal_L31"/>
    <property type="match status" value="1"/>
</dbReference>
<dbReference type="PRINTS" id="PR01249">
    <property type="entry name" value="RIBOSOMALL31"/>
</dbReference>
<dbReference type="SUPFAM" id="SSF143800">
    <property type="entry name" value="L28p-like"/>
    <property type="match status" value="1"/>
</dbReference>
<dbReference type="PROSITE" id="PS01143">
    <property type="entry name" value="RIBOSOMAL_L31"/>
    <property type="match status" value="1"/>
</dbReference>
<gene>
    <name evidence="1" type="primary">rpmE</name>
    <name evidence="1" type="synonym">rpl31</name>
    <name type="ordered locus">NATL1_19761</name>
</gene>
<organism>
    <name type="scientific">Prochlorococcus marinus (strain NATL1A)</name>
    <dbReference type="NCBI Taxonomy" id="167555"/>
    <lineage>
        <taxon>Bacteria</taxon>
        <taxon>Bacillati</taxon>
        <taxon>Cyanobacteriota</taxon>
        <taxon>Cyanophyceae</taxon>
        <taxon>Synechococcales</taxon>
        <taxon>Prochlorococcaceae</taxon>
        <taxon>Prochlorococcus</taxon>
    </lineage>
</organism>
<keyword id="KW-0687">Ribonucleoprotein</keyword>
<keyword id="KW-0689">Ribosomal protein</keyword>
<keyword id="KW-0694">RNA-binding</keyword>
<keyword id="KW-0699">rRNA-binding</keyword>
<feature type="chain" id="PRO_1000126688" description="Large ribosomal subunit protein bL31">
    <location>
        <begin position="1"/>
        <end position="86"/>
    </location>
</feature>
<feature type="region of interest" description="Disordered" evidence="2">
    <location>
        <begin position="65"/>
        <end position="86"/>
    </location>
</feature>
<feature type="compositionally biased region" description="Basic and acidic residues" evidence="2">
    <location>
        <begin position="73"/>
        <end position="86"/>
    </location>
</feature>
<comment type="function">
    <text evidence="1">Binds the 23S rRNA.</text>
</comment>
<comment type="subunit">
    <text evidence="1">Part of the 50S ribosomal subunit.</text>
</comment>
<comment type="similarity">
    <text evidence="1">Belongs to the bacterial ribosomal protein bL31 family. Type A subfamily.</text>
</comment>
<evidence type="ECO:0000255" key="1">
    <source>
        <dbReference type="HAMAP-Rule" id="MF_00501"/>
    </source>
</evidence>
<evidence type="ECO:0000256" key="2">
    <source>
        <dbReference type="SAM" id="MobiDB-lite"/>
    </source>
</evidence>
<evidence type="ECO:0000305" key="3"/>
<sequence length="86" mass="9811">MPKSDIHPTWYPEAKVICNGEVVMTTGATQPEIQVDVWSGNHPFFTGTQKILDTEGRVDRFMRKYRMASSDSSEQKDKSSEEKKES</sequence>
<reference key="1">
    <citation type="journal article" date="2007" name="PLoS Genet.">
        <title>Patterns and implications of gene gain and loss in the evolution of Prochlorococcus.</title>
        <authorList>
            <person name="Kettler G.C."/>
            <person name="Martiny A.C."/>
            <person name="Huang K."/>
            <person name="Zucker J."/>
            <person name="Coleman M.L."/>
            <person name="Rodrigue S."/>
            <person name="Chen F."/>
            <person name="Lapidus A."/>
            <person name="Ferriera S."/>
            <person name="Johnson J."/>
            <person name="Steglich C."/>
            <person name="Church G.M."/>
            <person name="Richardson P."/>
            <person name="Chisholm S.W."/>
        </authorList>
    </citation>
    <scope>NUCLEOTIDE SEQUENCE [LARGE SCALE GENOMIC DNA]</scope>
    <source>
        <strain>NATL1A</strain>
    </source>
</reference>
<proteinExistence type="inferred from homology"/>
<protein>
    <recommendedName>
        <fullName evidence="1">Large ribosomal subunit protein bL31</fullName>
    </recommendedName>
    <alternativeName>
        <fullName evidence="3">50S ribosomal protein L31</fullName>
    </alternativeName>
</protein>
<accession>A2C4X2</accession>
<name>RL31_PROM1</name>